<name>HTXA_STUST</name>
<comment type="function">
    <text evidence="1">Required for hypophosphite oxidation.</text>
</comment>
<comment type="similarity">
    <text evidence="2">Belongs to the PhyH family.</text>
</comment>
<sequence>MFAEQQREYLDKGYTKIESFFSAEEVAKILEDVKQIELGAIGVASDNETYQFEKKNGETTKLLRRVENPHLYFDAIDSLVRSEKIVDLLRHFLGENIRLHNSKINFKPPSGAPVQWHQDWAFYPHTNDDFLTLGIFLDETSEKNGAMACLPGSHKGKVYDHRNVETGEFCHAISRSNWDEALDPTEGELLTGPVGTVTLHHVRTLHGSGPNHSTIRRRFLLIGYAAADAWPLLGCGNYGDYESLMVSGRSTVFPRMVELPLTVPYPLSMYGDRIFESQRALTQKYY</sequence>
<feature type="chain" id="PRO_0000215233" description="Probable alpha-ketoglutarate-dependent hypophosphite dioxygenase">
    <location>
        <begin position="1"/>
        <end position="286"/>
    </location>
</feature>
<protein>
    <recommendedName>
        <fullName>Probable alpha-ketoglutarate-dependent hypophosphite dioxygenase</fullName>
        <ecNumber>1.-.-.-</ecNumber>
    </recommendedName>
</protein>
<gene>
    <name type="primary">htxA</name>
</gene>
<proteinExistence type="inferred from homology"/>
<evidence type="ECO:0000269" key="1">
    <source>
    </source>
</evidence>
<evidence type="ECO:0000305" key="2"/>
<dbReference type="EC" id="1.-.-.-"/>
<dbReference type="EMBL" id="AF061267">
    <property type="protein sequence ID" value="AAC71711.1"/>
    <property type="molecule type" value="Genomic_DNA"/>
</dbReference>
<dbReference type="RefSeq" id="WP_003118418.1">
    <property type="nucleotide sequence ID" value="NZ_JAOCEE010000026.1"/>
</dbReference>
<dbReference type="SMR" id="O69060"/>
<dbReference type="GO" id="GO:0016706">
    <property type="term" value="F:2-oxoglutarate-dependent dioxygenase activity"/>
    <property type="evidence" value="ECO:0007669"/>
    <property type="project" value="UniProtKB-ARBA"/>
</dbReference>
<dbReference type="GO" id="GO:0005506">
    <property type="term" value="F:iron ion binding"/>
    <property type="evidence" value="ECO:0007669"/>
    <property type="project" value="UniProtKB-ARBA"/>
</dbReference>
<dbReference type="Gene3D" id="2.60.120.620">
    <property type="entry name" value="q2cbj1_9rhob like domain"/>
    <property type="match status" value="1"/>
</dbReference>
<dbReference type="InterPro" id="IPR008775">
    <property type="entry name" value="Phytyl_CoA_dOase-like"/>
</dbReference>
<dbReference type="PANTHER" id="PTHR20883">
    <property type="entry name" value="PHYTANOYL-COA DIOXYGENASE DOMAIN CONTAINING 1"/>
    <property type="match status" value="1"/>
</dbReference>
<dbReference type="PANTHER" id="PTHR20883:SF46">
    <property type="entry name" value="PHYTANOYL-COA HYDROXYLASE"/>
    <property type="match status" value="1"/>
</dbReference>
<dbReference type="Pfam" id="PF05721">
    <property type="entry name" value="PhyH"/>
    <property type="match status" value="1"/>
</dbReference>
<dbReference type="SUPFAM" id="SSF51197">
    <property type="entry name" value="Clavaminate synthase-like"/>
    <property type="match status" value="1"/>
</dbReference>
<organism>
    <name type="scientific">Stutzerimonas stutzeri</name>
    <name type="common">Pseudomonas stutzeri</name>
    <dbReference type="NCBI Taxonomy" id="316"/>
    <lineage>
        <taxon>Bacteria</taxon>
        <taxon>Pseudomonadati</taxon>
        <taxon>Pseudomonadota</taxon>
        <taxon>Gammaproteobacteria</taxon>
        <taxon>Pseudomonadales</taxon>
        <taxon>Pseudomonadaceae</taxon>
        <taxon>Stutzerimonas</taxon>
    </lineage>
</organism>
<reference key="1">
    <citation type="journal article" date="1998" name="J. Bacteriol.">
        <title>Molecular genetic analysis of phosphite and hypophosphite oxidation by Pseudomonas stutzeri WM88.</title>
        <authorList>
            <person name="Metcalf W.W."/>
            <person name="Wolfe R.S."/>
        </authorList>
    </citation>
    <scope>NUCLEOTIDE SEQUENCE [GENOMIC DNA]</scope>
    <scope>FUNCTION</scope>
    <source>
        <strain>WM88</strain>
    </source>
</reference>
<keyword id="KW-0223">Dioxygenase</keyword>
<keyword id="KW-0560">Oxidoreductase</keyword>
<accession>O69060</accession>